<evidence type="ECO:0000255" key="1">
    <source>
        <dbReference type="HAMAP-Rule" id="MF_00803"/>
    </source>
</evidence>
<evidence type="ECO:0000256" key="2">
    <source>
        <dbReference type="SAM" id="MobiDB-lite"/>
    </source>
</evidence>
<organism>
    <name type="scientific">Halorubrum lacusprofundi (strain ATCC 49239 / DSM 5036 / JCM 8891 / ACAM 34)</name>
    <dbReference type="NCBI Taxonomy" id="416348"/>
    <lineage>
        <taxon>Archaea</taxon>
        <taxon>Methanobacteriati</taxon>
        <taxon>Methanobacteriota</taxon>
        <taxon>Stenosarchaea group</taxon>
        <taxon>Halobacteria</taxon>
        <taxon>Halobacteriales</taxon>
        <taxon>Haloferacaceae</taxon>
        <taxon>Halorubrum</taxon>
    </lineage>
</organism>
<protein>
    <recommendedName>
        <fullName evidence="1">Ribosome biogenesis protein Nop10</fullName>
    </recommendedName>
</protein>
<gene>
    <name evidence="1" type="primary">nop10</name>
    <name type="ordered locus">Hlac_1008</name>
</gene>
<proteinExistence type="inferred from homology"/>
<name>NOP10_HALLT</name>
<feature type="chain" id="PRO_1000148548" description="Ribosome biogenesis protein Nop10">
    <location>
        <begin position="1"/>
        <end position="60"/>
    </location>
</feature>
<feature type="region of interest" description="Disordered" evidence="2">
    <location>
        <begin position="29"/>
        <end position="60"/>
    </location>
</feature>
<keyword id="KW-1185">Reference proteome</keyword>
<keyword id="KW-0687">Ribonucleoprotein</keyword>
<keyword id="KW-0690">Ribosome biogenesis</keyword>
<keyword id="KW-0698">rRNA processing</keyword>
<comment type="function">
    <text evidence="1">Involved in ribosome biogenesis; more specifically in 18S rRNA pseudouridylation and in cleavage of pre-rRNA.</text>
</comment>
<comment type="similarity">
    <text evidence="1">Belongs to the NOP10 family.</text>
</comment>
<dbReference type="EMBL" id="CP001365">
    <property type="protein sequence ID" value="ACM56605.1"/>
    <property type="molecule type" value="Genomic_DNA"/>
</dbReference>
<dbReference type="RefSeq" id="WP_015909753.1">
    <property type="nucleotide sequence ID" value="NC_012029.1"/>
</dbReference>
<dbReference type="SMR" id="B9LML7"/>
<dbReference type="GeneID" id="7401903"/>
<dbReference type="KEGG" id="hla:Hlac_1008"/>
<dbReference type="eggNOG" id="arCOG00906">
    <property type="taxonomic scope" value="Archaea"/>
</dbReference>
<dbReference type="HOGENOM" id="CLU_196480_1_0_2"/>
<dbReference type="Proteomes" id="UP000000740">
    <property type="component" value="Chromosome 1"/>
</dbReference>
<dbReference type="GO" id="GO:1990904">
    <property type="term" value="C:ribonucleoprotein complex"/>
    <property type="evidence" value="ECO:0007669"/>
    <property type="project" value="UniProtKB-KW"/>
</dbReference>
<dbReference type="GO" id="GO:0030515">
    <property type="term" value="F:snoRNA binding"/>
    <property type="evidence" value="ECO:0007669"/>
    <property type="project" value="InterPro"/>
</dbReference>
<dbReference type="GO" id="GO:0001522">
    <property type="term" value="P:pseudouridine synthesis"/>
    <property type="evidence" value="ECO:0007669"/>
    <property type="project" value="InterPro"/>
</dbReference>
<dbReference type="GO" id="GO:0006364">
    <property type="term" value="P:rRNA processing"/>
    <property type="evidence" value="ECO:0007669"/>
    <property type="project" value="UniProtKB-UniRule"/>
</dbReference>
<dbReference type="Gene3D" id="2.20.28.40">
    <property type="entry name" value="H/ACA ribonucleoprotein complex, subunit Nop10"/>
    <property type="match status" value="1"/>
</dbReference>
<dbReference type="HAMAP" id="MF_00803">
    <property type="entry name" value="Nop10"/>
    <property type="match status" value="1"/>
</dbReference>
<dbReference type="InterPro" id="IPR007264">
    <property type="entry name" value="H/ACA_rnp_Nop10"/>
</dbReference>
<dbReference type="InterPro" id="IPR036756">
    <property type="entry name" value="H/ACA_rnp_Nop10_sf"/>
</dbReference>
<dbReference type="InterPro" id="IPR023532">
    <property type="entry name" value="Nop10_arc-typ"/>
</dbReference>
<dbReference type="NCBIfam" id="NF009623">
    <property type="entry name" value="PRK13130.1"/>
    <property type="match status" value="1"/>
</dbReference>
<dbReference type="Pfam" id="PF04135">
    <property type="entry name" value="Nop10p"/>
    <property type="match status" value="1"/>
</dbReference>
<dbReference type="SUPFAM" id="SSF144210">
    <property type="entry name" value="Nop10-like SnoRNP"/>
    <property type="match status" value="1"/>
</dbReference>
<accession>B9LML7</accession>
<sequence>MKSDIRVCANWETTHDRPVYALGDRCPECDGPTENSAPAPFSPEDPYGEYRRRVRRRASE</sequence>
<reference key="1">
    <citation type="journal article" date="2016" name="Stand. Genomic Sci.">
        <title>Complete genome sequence of the Antarctic Halorubrum lacusprofundi type strain ACAM 34.</title>
        <authorList>
            <person name="Anderson I.J."/>
            <person name="DasSarma P."/>
            <person name="Lucas S."/>
            <person name="Copeland A."/>
            <person name="Lapidus A."/>
            <person name="Del Rio T.G."/>
            <person name="Tice H."/>
            <person name="Dalin E."/>
            <person name="Bruce D.C."/>
            <person name="Goodwin L."/>
            <person name="Pitluck S."/>
            <person name="Sims D."/>
            <person name="Brettin T.S."/>
            <person name="Detter J.C."/>
            <person name="Han C.S."/>
            <person name="Larimer F."/>
            <person name="Hauser L."/>
            <person name="Land M."/>
            <person name="Ivanova N."/>
            <person name="Richardson P."/>
            <person name="Cavicchioli R."/>
            <person name="DasSarma S."/>
            <person name="Woese C.R."/>
            <person name="Kyrpides N.C."/>
        </authorList>
    </citation>
    <scope>NUCLEOTIDE SEQUENCE [LARGE SCALE GENOMIC DNA]</scope>
    <source>
        <strain>ATCC 49239 / DSM 5036 / JCM 8891 / ACAM 34</strain>
    </source>
</reference>